<name>BICC1_MOUSE</name>
<keyword id="KW-0007">Acetylation</keyword>
<keyword id="KW-0025">Alternative splicing</keyword>
<keyword id="KW-0963">Cytoplasm</keyword>
<keyword id="KW-0217">Developmental protein</keyword>
<keyword id="KW-0597">Phosphoprotein</keyword>
<keyword id="KW-1185">Reference proteome</keyword>
<keyword id="KW-0677">Repeat</keyword>
<keyword id="KW-0694">RNA-binding</keyword>
<sequence length="977" mass="105037">MASQSEPGYLAAAQSDPGSNSERSTDSPVAGSEDDLVAAAPLLHSPEWSEERFRVDRKKLEAMLQAAAEGKGRSGEDFFQKIMEETNTQIAWPSKLKIGAKSKKDPHIKVSGKKEDVKEAKEMIMSVLDTKSNRVTLKMDVSHTEHSHVIGKGGNNIKKVMEDTGCHIHFPDSNRNNQAEKSNQVSIAGQPAGVESARARIRELLPLVLMFELPIAGILQPVPDPNTPSIQHISQTYSVSVSFKQRSRMYGATVTVRGSQNNTNAVKEGTAMLLEHLAGSLASAIPVSTQLDIAAQHHLFMMGRNGSNVKHIMQRTGAQIHFPDPSNPQKKSTVYLQGTIESVCLARQYLMGCLPLVLMFDMKEDIEVDPQVIAQLMEQLDVFISIKPKPKQPSKSVIVKSVERNALNMYEARKCLLGLESSGVSIATSLSPASCPAGLACPSLDILASAGLGLTGLGLLGPTTLSLNTSATPNSLLNALNTSVSPLQSSSSGTPSPTLWAPPIANTASATGFSTIPHLMLPSTAQATLTNILLSGVPTYGHTAPSPPPGLTPVDVHINSMQTEGKNISASINGHVQPANMKYGPLSTSSLGEKVLSSNHGDPSMQTAGPEQASPKSNSVEGCNDAFVEVGMPRSPSHSGNAGDLKQMLGASKVSCAKRQTVELLQGTKNSHLHGTDRLLSDPELSATESPLADKKAPGSERAAERAAAAQQKSERARLASQPTYVHMQAFDYEQKKLLATKAMLKKPVVTEVRTPTNTWSGLGFSKSMPAETIKELRRANHVSYKPTMTTAYEGSSLSLSRSSSREHLASGSESDNWRDRNGIGPMGHSEFSAPIGSPKRKQNKSREHYLSSSNYMDCISSLTGSNGCNLNSCFKGSDLPELFSKLGLGKYTDVFQQQEIDLQTFLTLTDQDLKELGITTFGARRKMLLAISELSKNRRKLFEPPNASCTSFLEGGASGRLPRQYHSDIASVSGRW</sequence>
<organism>
    <name type="scientific">Mus musculus</name>
    <name type="common">Mouse</name>
    <dbReference type="NCBI Taxonomy" id="10090"/>
    <lineage>
        <taxon>Eukaryota</taxon>
        <taxon>Metazoa</taxon>
        <taxon>Chordata</taxon>
        <taxon>Craniata</taxon>
        <taxon>Vertebrata</taxon>
        <taxon>Euteleostomi</taxon>
        <taxon>Mammalia</taxon>
        <taxon>Eutheria</taxon>
        <taxon>Euarchontoglires</taxon>
        <taxon>Glires</taxon>
        <taxon>Rodentia</taxon>
        <taxon>Myomorpha</taxon>
        <taxon>Muroidea</taxon>
        <taxon>Muridae</taxon>
        <taxon>Murinae</taxon>
        <taxon>Mus</taxon>
        <taxon>Mus</taxon>
    </lineage>
</organism>
<gene>
    <name type="primary">Bicc1</name>
</gene>
<proteinExistence type="evidence at protein level"/>
<accession>Q99MQ1</accession>
<accession>Q6P6K3</accession>
<accession>Q8C286</accession>
<reference key="1">
    <citation type="journal article" date="2001" name="Mech. Dev.">
        <title>Identification and expression of the mammalian homologue of Bicaudal-C.</title>
        <authorList>
            <person name="Wessely O."/>
            <person name="Tran U."/>
            <person name="Zakin L."/>
            <person name="De Robertis E.M."/>
        </authorList>
    </citation>
    <scope>NUCLEOTIDE SEQUENCE [MRNA] (ISOFORM 1)</scope>
    <scope>TISSUE SPECIFICITY</scope>
    <source>
        <strain>FVB/N-3</strain>
    </source>
</reference>
<reference key="2">
    <citation type="journal article" date="2005" name="Science">
        <title>The transcriptional landscape of the mammalian genome.</title>
        <authorList>
            <person name="Carninci P."/>
            <person name="Kasukawa T."/>
            <person name="Katayama S."/>
            <person name="Gough J."/>
            <person name="Frith M.C."/>
            <person name="Maeda N."/>
            <person name="Oyama R."/>
            <person name="Ravasi T."/>
            <person name="Lenhard B."/>
            <person name="Wells C."/>
            <person name="Kodzius R."/>
            <person name="Shimokawa K."/>
            <person name="Bajic V.B."/>
            <person name="Brenner S.E."/>
            <person name="Batalov S."/>
            <person name="Forrest A.R."/>
            <person name="Zavolan M."/>
            <person name="Davis M.J."/>
            <person name="Wilming L.G."/>
            <person name="Aidinis V."/>
            <person name="Allen J.E."/>
            <person name="Ambesi-Impiombato A."/>
            <person name="Apweiler R."/>
            <person name="Aturaliya R.N."/>
            <person name="Bailey T.L."/>
            <person name="Bansal M."/>
            <person name="Baxter L."/>
            <person name="Beisel K.W."/>
            <person name="Bersano T."/>
            <person name="Bono H."/>
            <person name="Chalk A.M."/>
            <person name="Chiu K.P."/>
            <person name="Choudhary V."/>
            <person name="Christoffels A."/>
            <person name="Clutterbuck D.R."/>
            <person name="Crowe M.L."/>
            <person name="Dalla E."/>
            <person name="Dalrymple B.P."/>
            <person name="de Bono B."/>
            <person name="Della Gatta G."/>
            <person name="di Bernardo D."/>
            <person name="Down T."/>
            <person name="Engstrom P."/>
            <person name="Fagiolini M."/>
            <person name="Faulkner G."/>
            <person name="Fletcher C.F."/>
            <person name="Fukushima T."/>
            <person name="Furuno M."/>
            <person name="Futaki S."/>
            <person name="Gariboldi M."/>
            <person name="Georgii-Hemming P."/>
            <person name="Gingeras T.R."/>
            <person name="Gojobori T."/>
            <person name="Green R.E."/>
            <person name="Gustincich S."/>
            <person name="Harbers M."/>
            <person name="Hayashi Y."/>
            <person name="Hensch T.K."/>
            <person name="Hirokawa N."/>
            <person name="Hill D."/>
            <person name="Huminiecki L."/>
            <person name="Iacono M."/>
            <person name="Ikeo K."/>
            <person name="Iwama A."/>
            <person name="Ishikawa T."/>
            <person name="Jakt M."/>
            <person name="Kanapin A."/>
            <person name="Katoh M."/>
            <person name="Kawasawa Y."/>
            <person name="Kelso J."/>
            <person name="Kitamura H."/>
            <person name="Kitano H."/>
            <person name="Kollias G."/>
            <person name="Krishnan S.P."/>
            <person name="Kruger A."/>
            <person name="Kummerfeld S.K."/>
            <person name="Kurochkin I.V."/>
            <person name="Lareau L.F."/>
            <person name="Lazarevic D."/>
            <person name="Lipovich L."/>
            <person name="Liu J."/>
            <person name="Liuni S."/>
            <person name="McWilliam S."/>
            <person name="Madan Babu M."/>
            <person name="Madera M."/>
            <person name="Marchionni L."/>
            <person name="Matsuda H."/>
            <person name="Matsuzawa S."/>
            <person name="Miki H."/>
            <person name="Mignone F."/>
            <person name="Miyake S."/>
            <person name="Morris K."/>
            <person name="Mottagui-Tabar S."/>
            <person name="Mulder N."/>
            <person name="Nakano N."/>
            <person name="Nakauchi H."/>
            <person name="Ng P."/>
            <person name="Nilsson R."/>
            <person name="Nishiguchi S."/>
            <person name="Nishikawa S."/>
            <person name="Nori F."/>
            <person name="Ohara O."/>
            <person name="Okazaki Y."/>
            <person name="Orlando V."/>
            <person name="Pang K.C."/>
            <person name="Pavan W.J."/>
            <person name="Pavesi G."/>
            <person name="Pesole G."/>
            <person name="Petrovsky N."/>
            <person name="Piazza S."/>
            <person name="Reed J."/>
            <person name="Reid J.F."/>
            <person name="Ring B.Z."/>
            <person name="Ringwald M."/>
            <person name="Rost B."/>
            <person name="Ruan Y."/>
            <person name="Salzberg S.L."/>
            <person name="Sandelin A."/>
            <person name="Schneider C."/>
            <person name="Schoenbach C."/>
            <person name="Sekiguchi K."/>
            <person name="Semple C.A."/>
            <person name="Seno S."/>
            <person name="Sessa L."/>
            <person name="Sheng Y."/>
            <person name="Shibata Y."/>
            <person name="Shimada H."/>
            <person name="Shimada K."/>
            <person name="Silva D."/>
            <person name="Sinclair B."/>
            <person name="Sperling S."/>
            <person name="Stupka E."/>
            <person name="Sugiura K."/>
            <person name="Sultana R."/>
            <person name="Takenaka Y."/>
            <person name="Taki K."/>
            <person name="Tammoja K."/>
            <person name="Tan S.L."/>
            <person name="Tang S."/>
            <person name="Taylor M.S."/>
            <person name="Tegner J."/>
            <person name="Teichmann S.A."/>
            <person name="Ueda H.R."/>
            <person name="van Nimwegen E."/>
            <person name="Verardo R."/>
            <person name="Wei C.L."/>
            <person name="Yagi K."/>
            <person name="Yamanishi H."/>
            <person name="Zabarovsky E."/>
            <person name="Zhu S."/>
            <person name="Zimmer A."/>
            <person name="Hide W."/>
            <person name="Bult C."/>
            <person name="Grimmond S.M."/>
            <person name="Teasdale R.D."/>
            <person name="Liu E.T."/>
            <person name="Brusic V."/>
            <person name="Quackenbush J."/>
            <person name="Wahlestedt C."/>
            <person name="Mattick J.S."/>
            <person name="Hume D.A."/>
            <person name="Kai C."/>
            <person name="Sasaki D."/>
            <person name="Tomaru Y."/>
            <person name="Fukuda S."/>
            <person name="Kanamori-Katayama M."/>
            <person name="Suzuki M."/>
            <person name="Aoki J."/>
            <person name="Arakawa T."/>
            <person name="Iida J."/>
            <person name="Imamura K."/>
            <person name="Itoh M."/>
            <person name="Kato T."/>
            <person name="Kawaji H."/>
            <person name="Kawagashira N."/>
            <person name="Kawashima T."/>
            <person name="Kojima M."/>
            <person name="Kondo S."/>
            <person name="Konno H."/>
            <person name="Nakano K."/>
            <person name="Ninomiya N."/>
            <person name="Nishio T."/>
            <person name="Okada M."/>
            <person name="Plessy C."/>
            <person name="Shibata K."/>
            <person name="Shiraki T."/>
            <person name="Suzuki S."/>
            <person name="Tagami M."/>
            <person name="Waki K."/>
            <person name="Watahiki A."/>
            <person name="Okamura-Oho Y."/>
            <person name="Suzuki H."/>
            <person name="Kawai J."/>
            <person name="Hayashizaki Y."/>
        </authorList>
    </citation>
    <scope>NUCLEOTIDE SEQUENCE [LARGE SCALE MRNA] (ISOFORM 2)</scope>
    <source>
        <strain>NOD</strain>
        <tissue>Thymus</tissue>
    </source>
</reference>
<reference key="3">
    <citation type="journal article" date="2004" name="Genome Res.">
        <title>The status, quality, and expansion of the NIH full-length cDNA project: the Mammalian Gene Collection (MGC).</title>
        <authorList>
            <consortium name="The MGC Project Team"/>
        </authorList>
    </citation>
    <scope>NUCLEOTIDE SEQUENCE [LARGE SCALE MRNA] (ISOFORM 1)</scope>
    <source>
        <tissue>Bone</tissue>
    </source>
</reference>
<reference key="4">
    <citation type="journal article" date="2009" name="Biochem. Biophys. Res. Commun.">
        <title>The polycystic kidney disease-related proteins Bicc1 and SamCystin interact.</title>
        <authorList>
            <person name="Stagner E.E."/>
            <person name="Bouvrette D.J."/>
            <person name="Cheng J."/>
            <person name="Bryda E.C."/>
        </authorList>
    </citation>
    <scope>SUBCELLULAR LOCATION</scope>
    <scope>INTERACTION WITH ANKS6</scope>
</reference>
<reference key="5">
    <citation type="journal article" date="2010" name="Cell">
        <title>A tissue-specific atlas of mouse protein phosphorylation and expression.</title>
        <authorList>
            <person name="Huttlin E.L."/>
            <person name="Jedrychowski M.P."/>
            <person name="Elias J.E."/>
            <person name="Goswami T."/>
            <person name="Rad R."/>
            <person name="Beausoleil S.A."/>
            <person name="Villen J."/>
            <person name="Haas W."/>
            <person name="Sowa M.E."/>
            <person name="Gygi S.P."/>
        </authorList>
    </citation>
    <scope>PHOSPHORYLATION [LARGE SCALE ANALYSIS] AT SER-27; SER-32; SER-45; SER-614 AND SER-681</scope>
    <scope>IDENTIFICATION BY MASS SPECTROMETRY [LARGE SCALE ANALYSIS]</scope>
    <source>
        <tissue>Kidney</tissue>
        <tissue>Lung</tissue>
        <tissue>Spleen</tissue>
        <tissue>Testis</tissue>
    </source>
</reference>
<reference key="6">
    <citation type="journal article" date="2015" name="Kidney Int.">
        <title>Anks3 interacts with nephronophthisis proteins and is required for normal renal development.</title>
        <authorList>
            <person name="Yakulov T.A."/>
            <person name="Yasunaga T."/>
            <person name="Ramachandran H."/>
            <person name="Engel C."/>
            <person name="Mueller B."/>
            <person name="Hoff S."/>
            <person name="Dengjel J."/>
            <person name="Lienkamp S.S."/>
            <person name="Walz G."/>
        </authorList>
    </citation>
    <scope>INTERACTION WITH ANKS3</scope>
</reference>
<protein>
    <recommendedName>
        <fullName>Protein bicaudal C homolog 1</fullName>
        <shortName>Bic-C</shortName>
    </recommendedName>
</protein>
<evidence type="ECO:0000250" key="1">
    <source>
        <dbReference type="UniProtKB" id="Q9H694"/>
    </source>
</evidence>
<evidence type="ECO:0000255" key="2">
    <source>
        <dbReference type="PROSITE-ProRule" id="PRU00117"/>
    </source>
</evidence>
<evidence type="ECO:0000255" key="3">
    <source>
        <dbReference type="PROSITE-ProRule" id="PRU00184"/>
    </source>
</evidence>
<evidence type="ECO:0000256" key="4">
    <source>
        <dbReference type="SAM" id="MobiDB-lite"/>
    </source>
</evidence>
<evidence type="ECO:0000269" key="5">
    <source>
    </source>
</evidence>
<evidence type="ECO:0000269" key="6">
    <source>
    </source>
</evidence>
<evidence type="ECO:0000269" key="7">
    <source>
    </source>
</evidence>
<evidence type="ECO:0000303" key="8">
    <source>
    </source>
</evidence>
<evidence type="ECO:0000305" key="9"/>
<evidence type="ECO:0007744" key="10">
    <source>
    </source>
</evidence>
<feature type="chain" id="PRO_0000267715" description="Protein bicaudal C homolog 1">
    <location>
        <begin position="1"/>
        <end position="977"/>
    </location>
</feature>
<feature type="domain" description="KH 1" evidence="2">
    <location>
        <begin position="134"/>
        <end position="201"/>
    </location>
</feature>
<feature type="domain" description="KH 2" evidence="2">
    <location>
        <begin position="286"/>
        <end position="350"/>
    </location>
</feature>
<feature type="domain" description="SAM" evidence="3">
    <location>
        <begin position="875"/>
        <end position="938"/>
    </location>
</feature>
<feature type="region of interest" description="Disordered" evidence="4">
    <location>
        <begin position="1"/>
        <end position="43"/>
    </location>
</feature>
<feature type="region of interest" description="Disordered" evidence="4">
    <location>
        <begin position="590"/>
        <end position="622"/>
    </location>
</feature>
<feature type="region of interest" description="Disordered" evidence="4">
    <location>
        <begin position="667"/>
        <end position="702"/>
    </location>
</feature>
<feature type="region of interest" description="Disordered" evidence="4">
    <location>
        <begin position="794"/>
        <end position="848"/>
    </location>
</feature>
<feature type="compositionally biased region" description="Polar residues" evidence="4">
    <location>
        <begin position="590"/>
        <end position="621"/>
    </location>
</feature>
<feature type="compositionally biased region" description="Basic and acidic residues" evidence="4">
    <location>
        <begin position="692"/>
        <end position="702"/>
    </location>
</feature>
<feature type="compositionally biased region" description="Low complexity" evidence="4">
    <location>
        <begin position="794"/>
        <end position="803"/>
    </location>
</feature>
<feature type="modified residue" description="Phosphoserine" evidence="10">
    <location>
        <position position="27"/>
    </location>
</feature>
<feature type="modified residue" description="Phosphoserine" evidence="10">
    <location>
        <position position="32"/>
    </location>
</feature>
<feature type="modified residue" description="Phosphoserine" evidence="10">
    <location>
        <position position="45"/>
    </location>
</feature>
<feature type="modified residue" description="N6-acetyllysine" evidence="1">
    <location>
        <position position="400"/>
    </location>
</feature>
<feature type="modified residue" description="Phosphoserine" evidence="10">
    <location>
        <position position="614"/>
    </location>
</feature>
<feature type="modified residue" description="Phosphoserine" evidence="10">
    <location>
        <position position="681"/>
    </location>
</feature>
<feature type="splice variant" id="VSP_021950" description="In isoform 2." evidence="8">
    <location>
        <begin position="1"/>
        <end position="82"/>
    </location>
</feature>
<feature type="splice variant" id="VSP_021951" description="In isoform 2." evidence="8">
    <original>ELSKNRRKLFEPPNASCTSFLEGGASGRLPRQYHSDIASVSGRW</original>
    <variation>VCDSVQIRNKILRAARIL</variation>
    <location>
        <begin position="934"/>
        <end position="977"/>
    </location>
</feature>
<feature type="sequence conflict" description="In Ref. 2; BAC40732." evidence="9" ref="2">
    <original>H</original>
    <variation>R</variation>
    <location>
        <position position="276"/>
    </location>
</feature>
<comment type="function">
    <text>Putative RNA-binding protein. May be involved in regulating gene expression during embryonic development.</text>
</comment>
<comment type="subunit">
    <text evidence="6 7">Interacts (via KH domains) with ANKS6 (via SAM domain) in an RNA-dependent manner. Interacts with ANKS3 (PubMed:25671767).</text>
</comment>
<comment type="subcellular location">
    <subcellularLocation>
        <location evidence="6">Cytoplasm</location>
    </subcellularLocation>
</comment>
<comment type="alternative products">
    <event type="alternative splicing"/>
    <isoform>
        <id>Q99MQ1-1</id>
        <name>1</name>
        <sequence type="displayed"/>
    </isoform>
    <isoform>
        <id>Q99MQ1-2</id>
        <name>2</name>
        <sequence type="described" ref="VSP_021950 VSP_021951"/>
    </isoform>
</comment>
<comment type="tissue specificity">
    <text evidence="5">In the adult, predominantly expressed in heart and kidney. In 8 week old mice, expressed in growing primary oocytes and in the stromal cells of the theca.</text>
</comment>
<comment type="developmental stage">
    <text>In the developing embryo, first detected at the rostral tip of the primitive streak, Hensen's node, at the late streak stage. At the late headfold stage, expression demarcates the layer of the node from which definitive endoderm and midline mesoderm arises. At 6-8 somite stage observed in the definitive endoderm. Strong expression is detected in the caudal intestinal portal. At 12-15 somite stage is still present in the hindgut, but transient expression is also seen in tissues of neural and mesodermal origins. At 13 dpc present around all sites of cartilage formation, such as cervical vertebral bodies, ribs and Merckel's cartilage. Additionally, expressed in the derivatives of the pleuroperitoneal membrane, the diaphragm and the pericardium, as well as the mesenchyme of the developing lung. Expressed in both the mesonephros and metanephros.</text>
</comment>
<comment type="similarity">
    <text evidence="9">Belongs to the BicC family.</text>
</comment>
<dbReference type="EMBL" id="AF319464">
    <property type="protein sequence ID" value="AAK27347.1"/>
    <property type="molecule type" value="mRNA"/>
</dbReference>
<dbReference type="EMBL" id="AK089066">
    <property type="protein sequence ID" value="BAC40732.1"/>
    <property type="molecule type" value="mRNA"/>
</dbReference>
<dbReference type="EMBL" id="BC062174">
    <property type="protein sequence ID" value="AAH62174.1"/>
    <property type="molecule type" value="mRNA"/>
</dbReference>
<dbReference type="EMBL" id="BC111523">
    <property type="protein sequence ID" value="AAI11524.1"/>
    <property type="molecule type" value="mRNA"/>
</dbReference>
<dbReference type="CCDS" id="CCDS23915.1">
    <molecule id="Q99MQ1-1"/>
</dbReference>
<dbReference type="RefSeq" id="NP_113574.1">
    <molecule id="Q99MQ1-1"/>
    <property type="nucleotide sequence ID" value="NM_031397.3"/>
</dbReference>
<dbReference type="SMR" id="Q99MQ1"/>
<dbReference type="BioGRID" id="219959">
    <property type="interactions" value="2"/>
</dbReference>
<dbReference type="CORUM" id="Q99MQ1"/>
<dbReference type="FunCoup" id="Q99MQ1">
    <property type="interactions" value="544"/>
</dbReference>
<dbReference type="STRING" id="10090.ENSMUSP00000123201"/>
<dbReference type="GlyGen" id="Q99MQ1">
    <property type="glycosylation" value="1 site"/>
</dbReference>
<dbReference type="iPTMnet" id="Q99MQ1"/>
<dbReference type="PhosphoSitePlus" id="Q99MQ1"/>
<dbReference type="jPOST" id="Q99MQ1"/>
<dbReference type="PaxDb" id="10090-ENSMUSP00000123201"/>
<dbReference type="ProteomicsDB" id="273739">
    <molecule id="Q99MQ1-1"/>
</dbReference>
<dbReference type="ProteomicsDB" id="273740">
    <molecule id="Q99MQ1-2"/>
</dbReference>
<dbReference type="Pumba" id="Q99MQ1"/>
<dbReference type="Antibodypedia" id="51885">
    <property type="antibodies" value="160 antibodies from 25 providers"/>
</dbReference>
<dbReference type="DNASU" id="83675"/>
<dbReference type="Ensembl" id="ENSMUST00000131445.8">
    <molecule id="Q99MQ1-2"/>
    <property type="protein sequence ID" value="ENSMUSP00000119137.2"/>
    <property type="gene ID" value="ENSMUSG00000014329.15"/>
</dbReference>
<dbReference type="Ensembl" id="ENSMUST00000143791.8">
    <molecule id="Q99MQ1-1"/>
    <property type="protein sequence ID" value="ENSMUSP00000123201.2"/>
    <property type="gene ID" value="ENSMUSG00000014329.15"/>
</dbReference>
<dbReference type="GeneID" id="83675"/>
<dbReference type="KEGG" id="mmu:83675"/>
<dbReference type="UCSC" id="uc007fog.2">
    <molecule id="Q99MQ1-1"/>
    <property type="organism name" value="mouse"/>
</dbReference>
<dbReference type="UCSC" id="uc033fpy.1">
    <molecule id="Q99MQ1-2"/>
    <property type="organism name" value="mouse"/>
</dbReference>
<dbReference type="AGR" id="MGI:1933388"/>
<dbReference type="CTD" id="80114"/>
<dbReference type="MGI" id="MGI:1933388">
    <property type="gene designation" value="Bicc1"/>
</dbReference>
<dbReference type="VEuPathDB" id="HostDB:ENSMUSG00000014329"/>
<dbReference type="eggNOG" id="KOG2208">
    <property type="taxonomic scope" value="Eukaryota"/>
</dbReference>
<dbReference type="eggNOG" id="KOG4374">
    <property type="taxonomic scope" value="Eukaryota"/>
</dbReference>
<dbReference type="GeneTree" id="ENSGT00940000156276"/>
<dbReference type="HOGENOM" id="CLU_008040_0_0_1"/>
<dbReference type="InParanoid" id="Q99MQ1"/>
<dbReference type="OMA" id="LMYPTAA"/>
<dbReference type="OrthoDB" id="271862at2759"/>
<dbReference type="PhylomeDB" id="Q99MQ1"/>
<dbReference type="TreeFam" id="TF323767"/>
<dbReference type="BioGRID-ORCS" id="83675">
    <property type="hits" value="0 hits in 76 CRISPR screens"/>
</dbReference>
<dbReference type="ChiTaRS" id="Bicc1">
    <property type="organism name" value="mouse"/>
</dbReference>
<dbReference type="PRO" id="PR:Q99MQ1"/>
<dbReference type="Proteomes" id="UP000000589">
    <property type="component" value="Chromosome 10"/>
</dbReference>
<dbReference type="RNAct" id="Q99MQ1">
    <property type="molecule type" value="protein"/>
</dbReference>
<dbReference type="Bgee" id="ENSMUSG00000014329">
    <property type="expression patterns" value="Expressed in efferent duct and 230 other cell types or tissues"/>
</dbReference>
<dbReference type="ExpressionAtlas" id="Q99MQ1">
    <property type="expression patterns" value="baseline and differential"/>
</dbReference>
<dbReference type="GO" id="GO:0005737">
    <property type="term" value="C:cytoplasm"/>
    <property type="evidence" value="ECO:0007669"/>
    <property type="project" value="UniProtKB-SubCell"/>
</dbReference>
<dbReference type="GO" id="GO:0003723">
    <property type="term" value="F:RNA binding"/>
    <property type="evidence" value="ECO:0000247"/>
    <property type="project" value="MGI"/>
</dbReference>
<dbReference type="GO" id="GO:0007368">
    <property type="term" value="P:determination of left/right symmetry"/>
    <property type="evidence" value="ECO:0000315"/>
    <property type="project" value="MGI"/>
</dbReference>
<dbReference type="GO" id="GO:0007507">
    <property type="term" value="P:heart development"/>
    <property type="evidence" value="ECO:0000315"/>
    <property type="project" value="MGI"/>
</dbReference>
<dbReference type="GO" id="GO:0001822">
    <property type="term" value="P:kidney development"/>
    <property type="evidence" value="ECO:0000315"/>
    <property type="project" value="MGI"/>
</dbReference>
<dbReference type="GO" id="GO:0090090">
    <property type="term" value="P:negative regulation of canonical Wnt signaling pathway"/>
    <property type="evidence" value="ECO:0007669"/>
    <property type="project" value="Ensembl"/>
</dbReference>
<dbReference type="CDD" id="cd22420">
    <property type="entry name" value="KH-I_BICC1_rpt1"/>
    <property type="match status" value="1"/>
</dbReference>
<dbReference type="CDD" id="cd22421">
    <property type="entry name" value="KH-I_BICC1_rpt2"/>
    <property type="match status" value="1"/>
</dbReference>
<dbReference type="CDD" id="cd22422">
    <property type="entry name" value="KH-I_BICC1_rpt3"/>
    <property type="match status" value="1"/>
</dbReference>
<dbReference type="CDD" id="cd09520">
    <property type="entry name" value="SAM_BICC1"/>
    <property type="match status" value="1"/>
</dbReference>
<dbReference type="FunFam" id="1.10.150.50:FF:000025">
    <property type="entry name" value="Ankyrin repeat and sterile alpha motif domain-containing 6"/>
    <property type="match status" value="1"/>
</dbReference>
<dbReference type="FunFam" id="3.30.310.270:FF:000001">
    <property type="entry name" value="BicC family RNA binding protein 1"/>
    <property type="match status" value="1"/>
</dbReference>
<dbReference type="FunFam" id="3.30.310.270:FF:000002">
    <property type="entry name" value="BicC family RNA binding protein 1"/>
    <property type="match status" value="1"/>
</dbReference>
<dbReference type="FunFam" id="3.30.1370.10:FF:000064">
    <property type="entry name" value="protein bicaudal C homolog 1 isoform X1"/>
    <property type="match status" value="1"/>
</dbReference>
<dbReference type="Gene3D" id="3.30.310.270">
    <property type="match status" value="2"/>
</dbReference>
<dbReference type="Gene3D" id="3.30.1370.10">
    <property type="entry name" value="K Homology domain, type 1"/>
    <property type="match status" value="1"/>
</dbReference>
<dbReference type="Gene3D" id="1.10.150.50">
    <property type="entry name" value="Transcription Factor, Ets-1"/>
    <property type="match status" value="1"/>
</dbReference>
<dbReference type="InterPro" id="IPR054727">
    <property type="entry name" value="BICC1_KH"/>
</dbReference>
<dbReference type="InterPro" id="IPR047549">
    <property type="entry name" value="BICC1_KH-I_rpt1"/>
</dbReference>
<dbReference type="InterPro" id="IPR047554">
    <property type="entry name" value="BICC1_KH-I_rpt2"/>
</dbReference>
<dbReference type="InterPro" id="IPR047553">
    <property type="entry name" value="BICC1_KH-I_rpt3"/>
</dbReference>
<dbReference type="InterPro" id="IPR037974">
    <property type="entry name" value="BICC1_SAM_dom"/>
</dbReference>
<dbReference type="InterPro" id="IPR004087">
    <property type="entry name" value="KH_dom"/>
</dbReference>
<dbReference type="InterPro" id="IPR004088">
    <property type="entry name" value="KH_dom_type_1"/>
</dbReference>
<dbReference type="InterPro" id="IPR036612">
    <property type="entry name" value="KH_dom_type_1_sf"/>
</dbReference>
<dbReference type="InterPro" id="IPR001660">
    <property type="entry name" value="SAM"/>
</dbReference>
<dbReference type="InterPro" id="IPR013761">
    <property type="entry name" value="SAM/pointed_sf"/>
</dbReference>
<dbReference type="PANTHER" id="PTHR10627:SF78">
    <property type="entry name" value="PROTEIN BICAUDAL C HOMOLOG 1"/>
    <property type="match status" value="1"/>
</dbReference>
<dbReference type="PANTHER" id="PTHR10627">
    <property type="entry name" value="SCP160"/>
    <property type="match status" value="1"/>
</dbReference>
<dbReference type="Pfam" id="PF00013">
    <property type="entry name" value="KH_1"/>
    <property type="match status" value="2"/>
</dbReference>
<dbReference type="Pfam" id="PF22985">
    <property type="entry name" value="KH_BICC1"/>
    <property type="match status" value="2"/>
</dbReference>
<dbReference type="Pfam" id="PF24234">
    <property type="entry name" value="KH_BICC1_1st"/>
    <property type="match status" value="1"/>
</dbReference>
<dbReference type="Pfam" id="PF00536">
    <property type="entry name" value="SAM_1"/>
    <property type="match status" value="1"/>
</dbReference>
<dbReference type="SMART" id="SM00322">
    <property type="entry name" value="KH"/>
    <property type="match status" value="3"/>
</dbReference>
<dbReference type="SMART" id="SM00454">
    <property type="entry name" value="SAM"/>
    <property type="match status" value="1"/>
</dbReference>
<dbReference type="SUPFAM" id="SSF54791">
    <property type="entry name" value="Eukaryotic type KH-domain (KH-domain type I)"/>
    <property type="match status" value="3"/>
</dbReference>
<dbReference type="SUPFAM" id="SSF47769">
    <property type="entry name" value="SAM/Pointed domain"/>
    <property type="match status" value="1"/>
</dbReference>
<dbReference type="PROSITE" id="PS50084">
    <property type="entry name" value="KH_TYPE_1"/>
    <property type="match status" value="2"/>
</dbReference>
<dbReference type="PROSITE" id="PS50105">
    <property type="entry name" value="SAM_DOMAIN"/>
    <property type="match status" value="1"/>
</dbReference>